<name>CHRR_ECOLI</name>
<protein>
    <recommendedName>
        <fullName evidence="6">Quinone reductase</fullName>
        <ecNumber evidence="2">1.6.5.2</ecNumber>
    </recommendedName>
    <alternativeName>
        <fullName evidence="6">Chromate reductase</fullName>
        <shortName>CHRR</shortName>
        <ecNumber evidence="2 4 5">1.6.-.-</ecNumber>
    </alternativeName>
    <alternativeName>
        <fullName evidence="6">NAD(P)H dehydrogenase (quinone)</fullName>
    </alternativeName>
</protein>
<reference key="1">
    <citation type="journal article" date="1993" name="Genomics">
        <title>DNA sequence and analysis of 136 kilobases of the Escherichia coli genome: organizational symmetry around the origin of replication.</title>
        <authorList>
            <person name="Burland V.D."/>
            <person name="Plunkett G. III"/>
            <person name="Daniels D.L."/>
            <person name="Blattner F.R."/>
        </authorList>
    </citation>
    <scope>NUCLEOTIDE SEQUENCE [LARGE SCALE GENOMIC DNA]</scope>
    <source>
        <strain>K12 / MG1655 / ATCC 47076</strain>
    </source>
</reference>
<reference key="2">
    <citation type="journal article" date="1997" name="Science">
        <title>The complete genome sequence of Escherichia coli K-12.</title>
        <authorList>
            <person name="Blattner F.R."/>
            <person name="Plunkett G. III"/>
            <person name="Bloch C.A."/>
            <person name="Perna N.T."/>
            <person name="Burland V."/>
            <person name="Riley M."/>
            <person name="Collado-Vides J."/>
            <person name="Glasner J.D."/>
            <person name="Rode C.K."/>
            <person name="Mayhew G.F."/>
            <person name="Gregor J."/>
            <person name="Davis N.W."/>
            <person name="Kirkpatrick H.A."/>
            <person name="Goeden M.A."/>
            <person name="Rose D.J."/>
            <person name="Mau B."/>
            <person name="Shao Y."/>
        </authorList>
    </citation>
    <scope>NUCLEOTIDE SEQUENCE [LARGE SCALE GENOMIC DNA]</scope>
    <source>
        <strain>K12 / MG1655 / ATCC 47076</strain>
    </source>
</reference>
<reference key="3">
    <citation type="journal article" date="2006" name="Mol. Syst. Biol.">
        <title>Highly accurate genome sequences of Escherichia coli K-12 strains MG1655 and W3110.</title>
        <authorList>
            <person name="Hayashi K."/>
            <person name="Morooka N."/>
            <person name="Yamamoto Y."/>
            <person name="Fujita K."/>
            <person name="Isono K."/>
            <person name="Choi S."/>
            <person name="Ohtsubo E."/>
            <person name="Baba T."/>
            <person name="Wanner B.L."/>
            <person name="Mori H."/>
            <person name="Horiuchi T."/>
        </authorList>
    </citation>
    <scope>NUCLEOTIDE SEQUENCE [LARGE SCALE GENOMIC DNA]</scope>
    <source>
        <strain>K12 / W3110 / ATCC 27325 / DSM 5911</strain>
    </source>
</reference>
<reference key="4">
    <citation type="journal article" date="2004" name="Appl. Environ. Microbiol.">
        <title>Chromate-reducing properties of soluble flavoproteins from Pseudomonas putida and Escherichia coli.</title>
        <authorList>
            <person name="Ackerley D.F."/>
            <person name="Gonzalez C.F."/>
            <person name="Park C.H."/>
            <person name="Blake R. II"/>
            <person name="Keyhan M."/>
            <person name="Matin A."/>
        </authorList>
    </citation>
    <scope>FUNCTION</scope>
    <scope>CATALYTIC ACTIVITY</scope>
    <scope>BIOPHYSICOCHEMICAL PROPERTIES</scope>
    <scope>SUBSTRATE SPECIFICITY</scope>
    <scope>ACTIVITY REGULATION</scope>
    <scope>INDUCTION</scope>
    <scope>COFACTOR</scope>
</reference>
<reference key="5">
    <citation type="journal article" date="2006" name="Appl. Environ. Microbiol.">
        <title>Analysis of novel soluble chromate and uranyl reductases and generation of an improved enzyme by directed evolution.</title>
        <authorList>
            <person name="Barak Y."/>
            <person name="Ackerley D.F."/>
            <person name="Dodge C.J."/>
            <person name="Banwari L."/>
            <person name="Alex C."/>
            <person name="Francis A.J."/>
            <person name="Matin A."/>
        </authorList>
    </citation>
    <scope>FUNCTION</scope>
    <scope>CATALYTIC ACTIVITY</scope>
    <scope>BIOPHYSICOCHEMICAL PROPERTIES</scope>
    <scope>MUTAGENESIS OF TYR-128</scope>
</reference>
<reference key="6">
    <citation type="journal article" date="2006" name="J. Bacteriol.">
        <title>Effect of chromate stress on Escherichia coli K-12.</title>
        <authorList>
            <person name="Ackerley D.F."/>
            <person name="Barak Y."/>
            <person name="Lynch S.V."/>
            <person name="Curtin J."/>
            <person name="Matin A."/>
        </authorList>
    </citation>
    <scope>DISRUPTION PHENOTYPE</scope>
    <source>
        <strain>K12</strain>
    </source>
</reference>
<reference key="7">
    <citation type="journal article" date="2012" name="PLoS ONE">
        <title>Crystal structure of ChrR--a quinone reductase with the capacity to reduce chromate.</title>
        <authorList>
            <person name="Eswaramoorthy S."/>
            <person name="Poulain S."/>
            <person name="Hienerwadel R."/>
            <person name="Bremond N."/>
            <person name="Sylvester M.D."/>
            <person name="Zhang Y.B."/>
            <person name="Berthomieu C."/>
            <person name="Van Der Lelie D."/>
            <person name="Matin A."/>
        </authorList>
    </citation>
    <scope>X-RAY CRYSTALLOGRAPHY (2.2 ANGSTROMS) OF 3-188 IN COMPLEX WITH FMN</scope>
    <scope>FUNCTION</scope>
    <scope>CATALYTIC ACTIVITY</scope>
    <scope>MUTAGENESIS OF TYR-85; ARG-125; TYR-128 AND GLU-146</scope>
    <scope>SUBUNIT</scope>
    <source>
        <strain>K12</strain>
    </source>
</reference>
<accession>P0AGE6</accession>
<accession>P31465</accession>
<accession>Q2M831</accession>
<proteinExistence type="evidence at protein level"/>
<gene>
    <name type="primary">chrR</name>
    <name type="synonym">yieF</name>
    <name type="ordered locus">b3713</name>
    <name type="ordered locus">JW3691</name>
</gene>
<organism>
    <name type="scientific">Escherichia coli (strain K12)</name>
    <dbReference type="NCBI Taxonomy" id="83333"/>
    <lineage>
        <taxon>Bacteria</taxon>
        <taxon>Pseudomonadati</taxon>
        <taxon>Pseudomonadota</taxon>
        <taxon>Gammaproteobacteria</taxon>
        <taxon>Enterobacterales</taxon>
        <taxon>Enterobacteriaceae</taxon>
        <taxon>Escherichia</taxon>
    </lineage>
</organism>
<sequence>MSEKLQVVTLLGSLRKGSFNGMVARTLPKIAPASMEVNALPSIADIPLYDADVQQEEGFPATVEALAEQIRQADGVVIVTPEYNYSVPGGLKNAIDWLSRLPDQPLAGKPVLIQTSSMGVIGGARCQYHLRQILVFLDAMVMNKPEFMGGVIQNKVDPQTGEVIDQGTLDHLTGQLTAFGEFIQRVKI</sequence>
<feature type="chain" id="PRO_0000160596" description="Quinone reductase">
    <location>
        <begin position="1"/>
        <end position="188"/>
    </location>
</feature>
<feature type="binding site" evidence="5">
    <location>
        <begin position="13"/>
        <end position="20"/>
    </location>
    <ligand>
        <name>FMN</name>
        <dbReference type="ChEBI" id="CHEBI:58210"/>
    </ligand>
</feature>
<feature type="binding site" evidence="5">
    <location>
        <begin position="82"/>
        <end position="85"/>
    </location>
    <ligand>
        <name>FMN</name>
        <dbReference type="ChEBI" id="CHEBI:58210"/>
    </ligand>
</feature>
<feature type="binding site" evidence="5">
    <location>
        <position position="117"/>
    </location>
    <ligand>
        <name>FMN</name>
        <dbReference type="ChEBI" id="CHEBI:58210"/>
    </ligand>
</feature>
<feature type="mutagenesis site" description="Improves chromate reductase activity compared to the wild-type enzyme." evidence="5">
    <original>Y</original>
    <variation>N</variation>
    <location>
        <position position="85"/>
    </location>
</feature>
<feature type="mutagenesis site" description="Improves chromate reductase activity compared to the wild-type enzyme." evidence="5">
    <original>R</original>
    <variation>M</variation>
    <location>
        <position position="125"/>
    </location>
</feature>
<feature type="mutagenesis site" description="Improves chromate reductase activity compared to the wild-type enzyme. Increase of the affinity binding and catalytic efficiency for both chromate and uranyl." evidence="4 5">
    <original>Y</original>
    <variation>N</variation>
    <location>
        <position position="128"/>
    </location>
</feature>
<feature type="mutagenesis site" description="Improves chromate reductase activity compared to the wild-type enzyme." evidence="5">
    <original>E</original>
    <variation>T</variation>
    <location>
        <position position="146"/>
    </location>
</feature>
<feature type="strand" evidence="7">
    <location>
        <begin position="5"/>
        <end position="11"/>
    </location>
</feature>
<feature type="helix" evidence="7">
    <location>
        <begin position="19"/>
        <end position="26"/>
    </location>
</feature>
<feature type="helix" evidence="7">
    <location>
        <begin position="27"/>
        <end position="29"/>
    </location>
</feature>
<feature type="strand" evidence="7">
    <location>
        <begin position="35"/>
        <end position="39"/>
    </location>
</feature>
<feature type="helix" evidence="7">
    <location>
        <begin position="51"/>
        <end position="56"/>
    </location>
</feature>
<feature type="helix" evidence="7">
    <location>
        <begin position="61"/>
        <end position="72"/>
    </location>
</feature>
<feature type="strand" evidence="7">
    <location>
        <begin position="73"/>
        <end position="80"/>
    </location>
</feature>
<feature type="helix" evidence="7">
    <location>
        <begin position="89"/>
        <end position="99"/>
    </location>
</feature>
<feature type="turn" evidence="7">
    <location>
        <begin position="105"/>
        <end position="108"/>
    </location>
</feature>
<feature type="strand" evidence="7">
    <location>
        <begin position="110"/>
        <end position="116"/>
    </location>
</feature>
<feature type="turn" evidence="7">
    <location>
        <begin position="120"/>
        <end position="123"/>
    </location>
</feature>
<feature type="helix" evidence="7">
    <location>
        <begin position="124"/>
        <end position="136"/>
    </location>
</feature>
<feature type="strand" evidence="7">
    <location>
        <begin position="147"/>
        <end position="149"/>
    </location>
</feature>
<feature type="helix" evidence="7">
    <location>
        <begin position="152"/>
        <end position="155"/>
    </location>
</feature>
<feature type="turn" evidence="7">
    <location>
        <begin position="158"/>
        <end position="161"/>
    </location>
</feature>
<feature type="helix" evidence="7">
    <location>
        <begin position="166"/>
        <end position="182"/>
    </location>
</feature>
<keyword id="KW-0002">3D-structure</keyword>
<keyword id="KW-0285">Flavoprotein</keyword>
<keyword id="KW-0288">FMN</keyword>
<keyword id="KW-0520">NAD</keyword>
<keyword id="KW-0521">NADP</keyword>
<keyword id="KW-0560">Oxidoreductase</keyword>
<keyword id="KW-1185">Reference proteome</keyword>
<dbReference type="EC" id="1.6.5.2" evidence="2"/>
<dbReference type="EC" id="1.6.-.-" evidence="2 4 5"/>
<dbReference type="EMBL" id="L10328">
    <property type="protein sequence ID" value="AAA62064.1"/>
    <property type="molecule type" value="Genomic_DNA"/>
</dbReference>
<dbReference type="EMBL" id="U00096">
    <property type="protein sequence ID" value="AAC76736.1"/>
    <property type="molecule type" value="Genomic_DNA"/>
</dbReference>
<dbReference type="EMBL" id="AP009048">
    <property type="protein sequence ID" value="BAE77575.1"/>
    <property type="molecule type" value="Genomic_DNA"/>
</dbReference>
<dbReference type="PIR" id="B65174">
    <property type="entry name" value="B65174"/>
</dbReference>
<dbReference type="RefSeq" id="NP_418169.1">
    <property type="nucleotide sequence ID" value="NC_000913.3"/>
</dbReference>
<dbReference type="RefSeq" id="WP_001291268.1">
    <property type="nucleotide sequence ID" value="NZ_SSZK01000035.1"/>
</dbReference>
<dbReference type="PDB" id="3SVL">
    <property type="method" value="X-ray"/>
    <property type="resolution" value="2.20 A"/>
    <property type="chains" value="A/B=3-188"/>
</dbReference>
<dbReference type="PDBsum" id="3SVL"/>
<dbReference type="SMR" id="P0AGE6"/>
<dbReference type="BioGRID" id="4262171">
    <property type="interactions" value="19"/>
</dbReference>
<dbReference type="DIP" id="DIP-36041N"/>
<dbReference type="FunCoup" id="P0AGE6">
    <property type="interactions" value="451"/>
</dbReference>
<dbReference type="IntAct" id="P0AGE6">
    <property type="interactions" value="2"/>
</dbReference>
<dbReference type="STRING" id="511145.b3713"/>
<dbReference type="jPOST" id="P0AGE6"/>
<dbReference type="PaxDb" id="511145-b3713"/>
<dbReference type="EnsemblBacteria" id="AAC76736">
    <property type="protein sequence ID" value="AAC76736"/>
    <property type="gene ID" value="b3713"/>
</dbReference>
<dbReference type="GeneID" id="75173932"/>
<dbReference type="GeneID" id="948225"/>
<dbReference type="KEGG" id="ecj:JW3691"/>
<dbReference type="KEGG" id="eco:b3713"/>
<dbReference type="KEGG" id="ecoc:C3026_20130"/>
<dbReference type="PATRIC" id="fig|1411691.4.peg.2988"/>
<dbReference type="EchoBASE" id="EB1674"/>
<dbReference type="eggNOG" id="COG0431">
    <property type="taxonomic scope" value="Bacteria"/>
</dbReference>
<dbReference type="HOGENOM" id="CLU_055322_4_2_6"/>
<dbReference type="InParanoid" id="P0AGE6"/>
<dbReference type="OMA" id="YGGVWAQ"/>
<dbReference type="OrthoDB" id="9812295at2"/>
<dbReference type="PhylomeDB" id="P0AGE6"/>
<dbReference type="BioCyc" id="EcoCyc:EG11723-MONOMER"/>
<dbReference type="BioCyc" id="MetaCyc:EG11723-MONOMER"/>
<dbReference type="EvolutionaryTrace" id="P0AGE6"/>
<dbReference type="PRO" id="PR:P0AGE6"/>
<dbReference type="Proteomes" id="UP000000625">
    <property type="component" value="Chromosome"/>
</dbReference>
<dbReference type="GO" id="GO:0005829">
    <property type="term" value="C:cytosol"/>
    <property type="evidence" value="ECO:0000314"/>
    <property type="project" value="EcoCyc"/>
</dbReference>
<dbReference type="GO" id="GO:0010181">
    <property type="term" value="F:FMN binding"/>
    <property type="evidence" value="ECO:0000314"/>
    <property type="project" value="EcoCyc"/>
</dbReference>
<dbReference type="GO" id="GO:0042802">
    <property type="term" value="F:identical protein binding"/>
    <property type="evidence" value="ECO:0000314"/>
    <property type="project" value="EcoCyc"/>
</dbReference>
<dbReference type="GO" id="GO:0050136">
    <property type="term" value="F:NADH:ubiquinone reductase (non-electrogenic) activity"/>
    <property type="evidence" value="ECO:0007669"/>
    <property type="project" value="RHEA"/>
</dbReference>
<dbReference type="GO" id="GO:0008753">
    <property type="term" value="F:NADPH dehydrogenase (quinone) activity"/>
    <property type="evidence" value="ECO:0007669"/>
    <property type="project" value="RHEA"/>
</dbReference>
<dbReference type="GO" id="GO:0016491">
    <property type="term" value="F:oxidoreductase activity"/>
    <property type="evidence" value="ECO:0000314"/>
    <property type="project" value="EcoCyc"/>
</dbReference>
<dbReference type="GO" id="GO:0051289">
    <property type="term" value="P:protein homotetramerization"/>
    <property type="evidence" value="ECO:0000314"/>
    <property type="project" value="EcoCyc"/>
</dbReference>
<dbReference type="GO" id="GO:0006805">
    <property type="term" value="P:xenobiotic metabolic process"/>
    <property type="evidence" value="ECO:0000315"/>
    <property type="project" value="EcoCyc"/>
</dbReference>
<dbReference type="FunFam" id="3.40.50.360:FF:000014">
    <property type="entry name" value="NADPH-dependent FMN reductase"/>
    <property type="match status" value="1"/>
</dbReference>
<dbReference type="Gene3D" id="3.40.50.360">
    <property type="match status" value="1"/>
</dbReference>
<dbReference type="InterPro" id="IPR029039">
    <property type="entry name" value="Flavoprotein-like_sf"/>
</dbReference>
<dbReference type="InterPro" id="IPR005025">
    <property type="entry name" value="FMN_Rdtase-like_dom"/>
</dbReference>
<dbReference type="InterPro" id="IPR050712">
    <property type="entry name" value="NAD(P)H-dep_reductase"/>
</dbReference>
<dbReference type="PANTHER" id="PTHR30543">
    <property type="entry name" value="CHROMATE REDUCTASE"/>
    <property type="match status" value="1"/>
</dbReference>
<dbReference type="PANTHER" id="PTHR30543:SF21">
    <property type="entry name" value="NAD(P)H-DEPENDENT FMN REDUCTASE LOT6"/>
    <property type="match status" value="1"/>
</dbReference>
<dbReference type="Pfam" id="PF03358">
    <property type="entry name" value="FMN_red"/>
    <property type="match status" value="1"/>
</dbReference>
<dbReference type="SUPFAM" id="SSF52218">
    <property type="entry name" value="Flavoproteins"/>
    <property type="match status" value="1"/>
</dbReference>
<evidence type="ECO:0000250" key="1">
    <source>
        <dbReference type="UniProtKB" id="Q88FF8"/>
    </source>
</evidence>
<evidence type="ECO:0000269" key="2">
    <source>
    </source>
</evidence>
<evidence type="ECO:0000269" key="3">
    <source>
    </source>
</evidence>
<evidence type="ECO:0000269" key="4">
    <source>
    </source>
</evidence>
<evidence type="ECO:0000269" key="5">
    <source>
    </source>
</evidence>
<evidence type="ECO:0000305" key="6"/>
<evidence type="ECO:0007829" key="7">
    <source>
        <dbReference type="PDB" id="3SVL"/>
    </source>
</evidence>
<comment type="function">
    <text evidence="1 2 4 5">Catalyzes the reduction of quinones (PubMed:14766567). Acts by simultaneous two-electron transfer, avoiding formation of highly reactive semiquinone intermediates and producing quinols that promote tolerance of H(2)O(2). Quinone reduction is probably the primary biological role of ChrR (By similarity). Can also reduce toxic chromate to insoluble and less toxic Cr(3+). Catalyzes the transfer of three electrons to Cr(6+) producing Cr(3+) and one electron to molecular oxygen without producing the toxic Cr(5+) species and only producing a minimal amount of reactive oxygen species (ROS). Chromate reduction protects the cell against chromate toxicity, but is likely a secondary activity (PubMed:14766567, PubMed:17088379, PubMed:22558308). Can also reduce potassium ferricyanide, 2,6-dichloroindophenol, V(5+), Mo(6+), methylene blue, cytochrome c and U(6+) (PubMed:14766567, PubMed:17088379). During chromate reduction, is able to use both NAD or NADP equally well (PubMed:14766567).</text>
</comment>
<comment type="catalytic activity">
    <reaction evidence="2">
        <text>a quinone + NADH + H(+) = a quinol + NAD(+)</text>
        <dbReference type="Rhea" id="RHEA:46160"/>
        <dbReference type="ChEBI" id="CHEBI:15378"/>
        <dbReference type="ChEBI" id="CHEBI:24646"/>
        <dbReference type="ChEBI" id="CHEBI:57540"/>
        <dbReference type="ChEBI" id="CHEBI:57945"/>
        <dbReference type="ChEBI" id="CHEBI:132124"/>
        <dbReference type="EC" id="1.6.5.2"/>
    </reaction>
</comment>
<comment type="catalytic activity">
    <reaction evidence="2">
        <text>a quinone + NADPH + H(+) = a quinol + NADP(+)</text>
        <dbReference type="Rhea" id="RHEA:46164"/>
        <dbReference type="ChEBI" id="CHEBI:15378"/>
        <dbReference type="ChEBI" id="CHEBI:24646"/>
        <dbReference type="ChEBI" id="CHEBI:57783"/>
        <dbReference type="ChEBI" id="CHEBI:58349"/>
        <dbReference type="ChEBI" id="CHEBI:132124"/>
        <dbReference type="EC" id="1.6.5.2"/>
    </reaction>
</comment>
<comment type="catalytic activity">
    <reaction evidence="2 4 5">
        <text>Cr(6+) + 2 NADH + O2 = Cr(3+) + superoxide + 2 NAD(+) + 2 H(+)</text>
        <dbReference type="Rhea" id="RHEA:44372"/>
        <dbReference type="ChEBI" id="CHEBI:15378"/>
        <dbReference type="ChEBI" id="CHEBI:15379"/>
        <dbReference type="ChEBI" id="CHEBI:18421"/>
        <dbReference type="ChEBI" id="CHEBI:33007"/>
        <dbReference type="ChEBI" id="CHEBI:49544"/>
        <dbReference type="ChEBI" id="CHEBI:57540"/>
        <dbReference type="ChEBI" id="CHEBI:57945"/>
    </reaction>
</comment>
<comment type="catalytic activity">
    <reaction evidence="2 4 5">
        <text>Cr(6+) + 2 NADPH + O2 = Cr(3+) + superoxide + 2 NADP(+) + 2 H(+)</text>
        <dbReference type="Rhea" id="RHEA:44368"/>
        <dbReference type="ChEBI" id="CHEBI:15378"/>
        <dbReference type="ChEBI" id="CHEBI:15379"/>
        <dbReference type="ChEBI" id="CHEBI:18421"/>
        <dbReference type="ChEBI" id="CHEBI:33007"/>
        <dbReference type="ChEBI" id="CHEBI:49544"/>
        <dbReference type="ChEBI" id="CHEBI:57783"/>
        <dbReference type="ChEBI" id="CHEBI:58349"/>
    </reaction>
</comment>
<comment type="cofactor">
    <cofactor evidence="2 5">
        <name>FMN</name>
        <dbReference type="ChEBI" id="CHEBI:58210"/>
    </cofactor>
    <text evidence="5">Binds 1 FMN per subunit.</text>
</comment>
<comment type="activity regulation">
    <text evidence="2">May be inhibited by divalent cations.</text>
</comment>
<comment type="biophysicochemical properties">
    <kinetics>
        <KM evidence="4">108 uM for uranyl (at pH 7 and 37 degrees Celsius)</KM>
        <KM evidence="2">200 uM for chromate (at pH 5 and 35 degrees Celsius)</KM>
        <KM evidence="4">376 uM for chromate (at pH 7 and 37 degrees Celsius)</KM>
        <Vmax evidence="2">5.0 umol/min/mg enzyme with chromate as substrate (at pH 5 and 35 degrees Celsius)</Vmax>
        <Vmax evidence="4">213.0 nmol/min/mg enzyme with uranyl as substrate (at pH 7 and 37 degrees Celsius)</Vmax>
        <Vmax evidence="4">295.0 nmol/min/mg enzyme with chromate as substrate (at pH 7 and 37 degrees Celsius)</Vmax>
        <text evidence="2 4">kcat is 3.7 sec(-1) with chromate as substrate (at pH 5 and 35 degrees Celsius) (PubMed:14766567). kcat is 29 sec(-1) with uranyl as substrate (at pH 7 and 37 degrees Celsius) (PubMed:17088379). kcat is 30 sec(-1) with chromate as substrate (at pH 7 and 37 degrees Celsius) (PubMed:17088379).</text>
    </kinetics>
    <phDependence>
        <text evidence="2">Optimum pH is 5.</text>
    </phDependence>
    <temperatureDependence>
        <text evidence="2">Optimum temperature is 35 degrees Celsius.</text>
    </temperatureDependence>
</comment>
<comment type="subunit">
    <text evidence="5">Homotetramer. Dimer of dimers. The tetrameric configuration has a central role in chromate reductase activity.</text>
</comment>
<comment type="induction">
    <text evidence="2">Induced by both chromate and the stationary phase.</text>
</comment>
<comment type="disruption phenotype">
    <text evidence="3">Cells lacking this gene show an increased sensitivity to chromate.</text>
</comment>
<comment type="similarity">
    <text evidence="6">Belongs to the SsuE family.</text>
</comment>